<evidence type="ECO:0000255" key="1">
    <source>
        <dbReference type="HAMAP-Rule" id="MF_00267"/>
    </source>
</evidence>
<evidence type="ECO:0000305" key="2"/>
<name>MINC_AGRFC</name>
<reference key="1">
    <citation type="journal article" date="2001" name="Science">
        <title>The genome of the natural genetic engineer Agrobacterium tumefaciens C58.</title>
        <authorList>
            <person name="Wood D.W."/>
            <person name="Setubal J.C."/>
            <person name="Kaul R."/>
            <person name="Monks D.E."/>
            <person name="Kitajima J.P."/>
            <person name="Okura V.K."/>
            <person name="Zhou Y."/>
            <person name="Chen L."/>
            <person name="Wood G.E."/>
            <person name="Almeida N.F. Jr."/>
            <person name="Woo L."/>
            <person name="Chen Y."/>
            <person name="Paulsen I.T."/>
            <person name="Eisen J.A."/>
            <person name="Karp P.D."/>
            <person name="Bovee D. Sr."/>
            <person name="Chapman P."/>
            <person name="Clendenning J."/>
            <person name="Deatherage G."/>
            <person name="Gillet W."/>
            <person name="Grant C."/>
            <person name="Kutyavin T."/>
            <person name="Levy R."/>
            <person name="Li M.-J."/>
            <person name="McClelland E."/>
            <person name="Palmieri A."/>
            <person name="Raymond C."/>
            <person name="Rouse G."/>
            <person name="Saenphimmachak C."/>
            <person name="Wu Z."/>
            <person name="Romero P."/>
            <person name="Gordon D."/>
            <person name="Zhang S."/>
            <person name="Yoo H."/>
            <person name="Tao Y."/>
            <person name="Biddle P."/>
            <person name="Jung M."/>
            <person name="Krespan W."/>
            <person name="Perry M."/>
            <person name="Gordon-Kamm B."/>
            <person name="Liao L."/>
            <person name="Kim S."/>
            <person name="Hendrick C."/>
            <person name="Zhao Z.-Y."/>
            <person name="Dolan M."/>
            <person name="Chumley F."/>
            <person name="Tingey S.V."/>
            <person name="Tomb J.-F."/>
            <person name="Gordon M.P."/>
            <person name="Olson M.V."/>
            <person name="Nester E.W."/>
        </authorList>
    </citation>
    <scope>NUCLEOTIDE SEQUENCE [LARGE SCALE GENOMIC DNA]</scope>
    <source>
        <strain>C58 / ATCC 33970</strain>
    </source>
</reference>
<reference key="2">
    <citation type="journal article" date="2001" name="Science">
        <title>Genome sequence of the plant pathogen and biotechnology agent Agrobacterium tumefaciens C58.</title>
        <authorList>
            <person name="Goodner B."/>
            <person name="Hinkle G."/>
            <person name="Gattung S."/>
            <person name="Miller N."/>
            <person name="Blanchard M."/>
            <person name="Qurollo B."/>
            <person name="Goldman B.S."/>
            <person name="Cao Y."/>
            <person name="Askenazi M."/>
            <person name="Halling C."/>
            <person name="Mullin L."/>
            <person name="Houmiel K."/>
            <person name="Gordon J."/>
            <person name="Vaudin M."/>
            <person name="Iartchouk O."/>
            <person name="Epp A."/>
            <person name="Liu F."/>
            <person name="Wollam C."/>
            <person name="Allinger M."/>
            <person name="Doughty D."/>
            <person name="Scott C."/>
            <person name="Lappas C."/>
            <person name="Markelz B."/>
            <person name="Flanagan C."/>
            <person name="Crowell C."/>
            <person name="Gurson J."/>
            <person name="Lomo C."/>
            <person name="Sear C."/>
            <person name="Strub G."/>
            <person name="Cielo C."/>
            <person name="Slater S."/>
        </authorList>
    </citation>
    <scope>NUCLEOTIDE SEQUENCE [LARGE SCALE GENOMIC DNA]</scope>
    <source>
        <strain>C58 / ATCC 33970</strain>
    </source>
</reference>
<gene>
    <name evidence="1" type="primary">minC</name>
    <name type="ordered locus">Atu3249</name>
    <name type="ORF">AGR_L_3131</name>
</gene>
<feature type="chain" id="PRO_0000189011" description="Probable septum site-determining protein MinC">
    <location>
        <begin position="1"/>
        <end position="242"/>
    </location>
</feature>
<comment type="function">
    <text evidence="1">Cell division inhibitor that blocks the formation of polar Z ring septums. Rapidly oscillates between the poles of the cell to destabilize FtsZ filaments that have formed before they mature into polar Z rings. Prevents FtsZ polymerization.</text>
</comment>
<comment type="subunit">
    <text evidence="1">Interacts with MinD and FtsZ.</text>
</comment>
<comment type="similarity">
    <text evidence="1">Belongs to the MinC family.</text>
</comment>
<comment type="sequence caution" evidence="2">
    <conflict type="erroneous initiation">
        <sequence resource="EMBL-CDS" id="AAK90140"/>
    </conflict>
</comment>
<proteinExistence type="inferred from homology"/>
<organism>
    <name type="scientific">Agrobacterium fabrum (strain C58 / ATCC 33970)</name>
    <name type="common">Agrobacterium tumefaciens (strain C58)</name>
    <dbReference type="NCBI Taxonomy" id="176299"/>
    <lineage>
        <taxon>Bacteria</taxon>
        <taxon>Pseudomonadati</taxon>
        <taxon>Pseudomonadota</taxon>
        <taxon>Alphaproteobacteria</taxon>
        <taxon>Hyphomicrobiales</taxon>
        <taxon>Rhizobiaceae</taxon>
        <taxon>Rhizobium/Agrobacterium group</taxon>
        <taxon>Agrobacterium</taxon>
        <taxon>Agrobacterium tumefaciens complex</taxon>
    </lineage>
</organism>
<sequence>MTKVLTDQRSIRIKGRSFLAVVLSPESPVDQWLERLDDLAARSAGFFLSRPVVLDVSELSLDKAGLKELLAALRERNVGIMGIEGVRPSMIEPGMPPSLKGGKPASDVEVEPVAVAAELPEDKPHASGEVRAVVQSLVINEPVRSGQSIMFPEGDVTVIGSVASGAEIIAGGSVHIYGALRGRAMAGSLGNVSARIFCRKLEAELLAIDGVYKVAEDIDDKLRGQPVQLWLENDTIKAAKLG</sequence>
<accession>Q8UAW8</accession>
<dbReference type="EMBL" id="AE007870">
    <property type="protein sequence ID" value="AAK90140.2"/>
    <property type="status" value="ALT_INIT"/>
    <property type="molecule type" value="Genomic_DNA"/>
</dbReference>
<dbReference type="PIR" id="AC2956">
    <property type="entry name" value="AC2956"/>
</dbReference>
<dbReference type="PIR" id="B98327">
    <property type="entry name" value="B98327"/>
</dbReference>
<dbReference type="RefSeq" id="NP_357355.2">
    <property type="nucleotide sequence ID" value="NC_003063.2"/>
</dbReference>
<dbReference type="RefSeq" id="WP_035257422.1">
    <property type="nucleotide sequence ID" value="NC_003063.2"/>
</dbReference>
<dbReference type="SMR" id="Q8UAW8"/>
<dbReference type="STRING" id="176299.Atu3249"/>
<dbReference type="EnsemblBacteria" id="AAK90140">
    <property type="protein sequence ID" value="AAK90140"/>
    <property type="gene ID" value="Atu3249"/>
</dbReference>
<dbReference type="GeneID" id="1135123"/>
<dbReference type="KEGG" id="atu:Atu3249"/>
<dbReference type="PATRIC" id="fig|176299.10.peg.3091"/>
<dbReference type="eggNOG" id="COG0850">
    <property type="taxonomic scope" value="Bacteria"/>
</dbReference>
<dbReference type="HOGENOM" id="CLU_067812_1_0_5"/>
<dbReference type="OrthoDB" id="9794530at2"/>
<dbReference type="Proteomes" id="UP000000813">
    <property type="component" value="Chromosome linear"/>
</dbReference>
<dbReference type="GO" id="GO:0000902">
    <property type="term" value="P:cell morphogenesis"/>
    <property type="evidence" value="ECO:0007669"/>
    <property type="project" value="InterPro"/>
</dbReference>
<dbReference type="GO" id="GO:0000917">
    <property type="term" value="P:division septum assembly"/>
    <property type="evidence" value="ECO:0007669"/>
    <property type="project" value="UniProtKB-KW"/>
</dbReference>
<dbReference type="GO" id="GO:0051302">
    <property type="term" value="P:regulation of cell division"/>
    <property type="evidence" value="ECO:0007669"/>
    <property type="project" value="InterPro"/>
</dbReference>
<dbReference type="GO" id="GO:1901891">
    <property type="term" value="P:regulation of cell septum assembly"/>
    <property type="evidence" value="ECO:0007669"/>
    <property type="project" value="InterPro"/>
</dbReference>
<dbReference type="Gene3D" id="2.160.20.70">
    <property type="match status" value="1"/>
</dbReference>
<dbReference type="Gene3D" id="3.30.70.260">
    <property type="match status" value="1"/>
</dbReference>
<dbReference type="HAMAP" id="MF_00267">
    <property type="entry name" value="MinC"/>
    <property type="match status" value="1"/>
</dbReference>
<dbReference type="InterPro" id="IPR016098">
    <property type="entry name" value="CAP/MinC_C"/>
</dbReference>
<dbReference type="InterPro" id="IPR013033">
    <property type="entry name" value="MinC"/>
</dbReference>
<dbReference type="InterPro" id="IPR036145">
    <property type="entry name" value="MinC_C_sf"/>
</dbReference>
<dbReference type="InterPro" id="IPR007874">
    <property type="entry name" value="MinC_N"/>
</dbReference>
<dbReference type="InterPro" id="IPR005526">
    <property type="entry name" value="Septum_form_inhib_MinC_C"/>
</dbReference>
<dbReference type="NCBIfam" id="TIGR01222">
    <property type="entry name" value="minC"/>
    <property type="match status" value="1"/>
</dbReference>
<dbReference type="PANTHER" id="PTHR34108">
    <property type="entry name" value="SEPTUM SITE-DETERMINING PROTEIN MINC"/>
    <property type="match status" value="1"/>
</dbReference>
<dbReference type="PANTHER" id="PTHR34108:SF1">
    <property type="entry name" value="SEPTUM SITE-DETERMINING PROTEIN MINC"/>
    <property type="match status" value="1"/>
</dbReference>
<dbReference type="Pfam" id="PF03775">
    <property type="entry name" value="MinC_C"/>
    <property type="match status" value="1"/>
</dbReference>
<dbReference type="Pfam" id="PF05209">
    <property type="entry name" value="MinC_N"/>
    <property type="match status" value="1"/>
</dbReference>
<dbReference type="SUPFAM" id="SSF63848">
    <property type="entry name" value="Cell-division inhibitor MinC, C-terminal domain"/>
    <property type="match status" value="1"/>
</dbReference>
<keyword id="KW-0131">Cell cycle</keyword>
<keyword id="KW-0132">Cell division</keyword>
<keyword id="KW-1185">Reference proteome</keyword>
<keyword id="KW-0717">Septation</keyword>
<protein>
    <recommendedName>
        <fullName evidence="1">Probable septum site-determining protein MinC</fullName>
    </recommendedName>
</protein>